<proteinExistence type="inferred from homology"/>
<organism>
    <name type="scientific">Corynebacterium efficiens (strain DSM 44549 / YS-314 / AJ 12310 / JCM 11189 / NBRC 100395)</name>
    <dbReference type="NCBI Taxonomy" id="196164"/>
    <lineage>
        <taxon>Bacteria</taxon>
        <taxon>Bacillati</taxon>
        <taxon>Actinomycetota</taxon>
        <taxon>Actinomycetes</taxon>
        <taxon>Mycobacteriales</taxon>
        <taxon>Corynebacteriaceae</taxon>
        <taxon>Corynebacterium</taxon>
    </lineage>
</organism>
<dbReference type="EMBL" id="BA000035">
    <property type="protein sequence ID" value="BAC18430.1"/>
    <property type="molecule type" value="Genomic_DNA"/>
</dbReference>
<dbReference type="RefSeq" id="WP_006767620.1">
    <property type="nucleotide sequence ID" value="NC_004369.1"/>
</dbReference>
<dbReference type="SMR" id="Q8FTE9"/>
<dbReference type="STRING" id="196164.gene:10742039"/>
<dbReference type="KEGG" id="cef:CE1620"/>
<dbReference type="eggNOG" id="COG1826">
    <property type="taxonomic scope" value="Bacteria"/>
</dbReference>
<dbReference type="HOGENOM" id="CLU_086034_4_0_11"/>
<dbReference type="OrthoDB" id="5245163at2"/>
<dbReference type="Proteomes" id="UP000001409">
    <property type="component" value="Chromosome"/>
</dbReference>
<dbReference type="GO" id="GO:0033281">
    <property type="term" value="C:TAT protein transport complex"/>
    <property type="evidence" value="ECO:0007669"/>
    <property type="project" value="UniProtKB-UniRule"/>
</dbReference>
<dbReference type="GO" id="GO:0008320">
    <property type="term" value="F:protein transmembrane transporter activity"/>
    <property type="evidence" value="ECO:0007669"/>
    <property type="project" value="UniProtKB-UniRule"/>
</dbReference>
<dbReference type="GO" id="GO:0043953">
    <property type="term" value="P:protein transport by the Tat complex"/>
    <property type="evidence" value="ECO:0007669"/>
    <property type="project" value="UniProtKB-UniRule"/>
</dbReference>
<dbReference type="Gene3D" id="1.20.5.3310">
    <property type="match status" value="1"/>
</dbReference>
<dbReference type="HAMAP" id="MF_00236">
    <property type="entry name" value="TatA_E"/>
    <property type="match status" value="1"/>
</dbReference>
<dbReference type="InterPro" id="IPR003369">
    <property type="entry name" value="TatA/B/E"/>
</dbReference>
<dbReference type="InterPro" id="IPR006312">
    <property type="entry name" value="TatA/E"/>
</dbReference>
<dbReference type="NCBIfam" id="NF001854">
    <property type="entry name" value="PRK00575.1"/>
    <property type="match status" value="1"/>
</dbReference>
<dbReference type="NCBIfam" id="TIGR01411">
    <property type="entry name" value="tatAE"/>
    <property type="match status" value="1"/>
</dbReference>
<dbReference type="PANTHER" id="PTHR42982">
    <property type="entry name" value="SEC-INDEPENDENT PROTEIN TRANSLOCASE PROTEIN TATA"/>
    <property type="match status" value="1"/>
</dbReference>
<dbReference type="PANTHER" id="PTHR42982:SF8">
    <property type="entry name" value="SEC-INDEPENDENT PROTEIN TRANSLOCASE PROTEIN TATA"/>
    <property type="match status" value="1"/>
</dbReference>
<dbReference type="Pfam" id="PF02416">
    <property type="entry name" value="TatA_B_E"/>
    <property type="match status" value="1"/>
</dbReference>
<comment type="function">
    <text evidence="1">Part of the twin-arginine translocation (Tat) system that transports large folded proteins containing a characteristic twin-arginine motif in their signal peptide across membranes. TatA could form the protein-conducting channel of the Tat system.</text>
</comment>
<comment type="subunit">
    <text evidence="1">The Tat system comprises two distinct complexes: a TatABC complex, containing multiple copies of TatA, TatB and TatC subunits, and a separate TatA complex, containing only TatA subunits. Substrates initially bind to the TatABC complex, which probably triggers association of the separate TatA complex to form the active translocon.</text>
</comment>
<comment type="subcellular location">
    <subcellularLocation>
        <location evidence="1">Cell membrane</location>
        <topology evidence="1">Single-pass membrane protein</topology>
    </subcellularLocation>
</comment>
<comment type="similarity">
    <text evidence="1">Belongs to the TatA/E family.</text>
</comment>
<gene>
    <name evidence="1" type="primary">tatA</name>
    <name type="ordered locus">CE1620</name>
</gene>
<name>TATA_COREF</name>
<sequence length="103" mass="11996">MSLGPWEIAIIVLLIIVLFGAKKLPDAARSIGRSMRIFKSEVKEMQKDDETPAQPEQQPQGYQHPQQIEAPQNLQQPNFQQHYQNQPQQPDYRQNYEDPNRTP</sequence>
<reference key="1">
    <citation type="journal article" date="2003" name="Genome Res.">
        <title>Comparative complete genome sequence analysis of the amino acid replacements responsible for the thermostability of Corynebacterium efficiens.</title>
        <authorList>
            <person name="Nishio Y."/>
            <person name="Nakamura Y."/>
            <person name="Kawarabayasi Y."/>
            <person name="Usuda Y."/>
            <person name="Kimura E."/>
            <person name="Sugimoto S."/>
            <person name="Matsui K."/>
            <person name="Yamagishi A."/>
            <person name="Kikuchi H."/>
            <person name="Ikeo K."/>
            <person name="Gojobori T."/>
        </authorList>
    </citation>
    <scope>NUCLEOTIDE SEQUENCE [LARGE SCALE GENOMIC DNA]</scope>
    <source>
        <strain>DSM 44549 / YS-314 / AJ 12310 / JCM 11189 / NBRC 100395</strain>
    </source>
</reference>
<evidence type="ECO:0000255" key="1">
    <source>
        <dbReference type="HAMAP-Rule" id="MF_00236"/>
    </source>
</evidence>
<evidence type="ECO:0000256" key="2">
    <source>
        <dbReference type="SAM" id="MobiDB-lite"/>
    </source>
</evidence>
<protein>
    <recommendedName>
        <fullName evidence="1">Sec-independent protein translocase protein TatA</fullName>
    </recommendedName>
</protein>
<accession>Q8FTE9</accession>
<feature type="chain" id="PRO_1000044381" description="Sec-independent protein translocase protein TatA">
    <location>
        <begin position="1"/>
        <end position="103"/>
    </location>
</feature>
<feature type="transmembrane region" description="Helical" evidence="1">
    <location>
        <begin position="1"/>
        <end position="21"/>
    </location>
</feature>
<feature type="region of interest" description="Disordered" evidence="2">
    <location>
        <begin position="42"/>
        <end position="103"/>
    </location>
</feature>
<feature type="compositionally biased region" description="Low complexity" evidence="2">
    <location>
        <begin position="52"/>
        <end position="90"/>
    </location>
</feature>
<feature type="compositionally biased region" description="Basic and acidic residues" evidence="2">
    <location>
        <begin position="94"/>
        <end position="103"/>
    </location>
</feature>
<keyword id="KW-1003">Cell membrane</keyword>
<keyword id="KW-0472">Membrane</keyword>
<keyword id="KW-0653">Protein transport</keyword>
<keyword id="KW-1185">Reference proteome</keyword>
<keyword id="KW-0811">Translocation</keyword>
<keyword id="KW-0812">Transmembrane</keyword>
<keyword id="KW-1133">Transmembrane helix</keyword>
<keyword id="KW-0813">Transport</keyword>